<name>RF2_CAMJ8</name>
<reference key="1">
    <citation type="journal article" date="2007" name="J. Bacteriol.">
        <title>The complete genome sequence of Campylobacter jejuni strain 81116 (NCTC11828).</title>
        <authorList>
            <person name="Pearson B.M."/>
            <person name="Gaskin D.J.H."/>
            <person name="Segers R.P.A.M."/>
            <person name="Wells J.M."/>
            <person name="Nuijten P.J.M."/>
            <person name="van Vliet A.H.M."/>
        </authorList>
    </citation>
    <scope>NUCLEOTIDE SEQUENCE [LARGE SCALE GENOMIC DNA]</scope>
    <source>
        <strain>81116 / NCTC 11828</strain>
    </source>
</reference>
<dbReference type="EMBL" id="CP000814">
    <property type="protein sequence ID" value="ABV52959.1"/>
    <property type="molecule type" value="Genomic_DNA"/>
</dbReference>
<dbReference type="RefSeq" id="WP_002867022.1">
    <property type="nucleotide sequence ID" value="NC_009839.1"/>
</dbReference>
<dbReference type="SMR" id="A8FNC2"/>
<dbReference type="KEGG" id="cju:C8J_1361"/>
<dbReference type="HOGENOM" id="CLU_036856_6_0_7"/>
<dbReference type="GO" id="GO:0005737">
    <property type="term" value="C:cytoplasm"/>
    <property type="evidence" value="ECO:0007669"/>
    <property type="project" value="UniProtKB-SubCell"/>
</dbReference>
<dbReference type="GO" id="GO:0016149">
    <property type="term" value="F:translation release factor activity, codon specific"/>
    <property type="evidence" value="ECO:0007669"/>
    <property type="project" value="UniProtKB-UniRule"/>
</dbReference>
<dbReference type="FunFam" id="3.30.160.20:FF:000010">
    <property type="entry name" value="Peptide chain release factor 2"/>
    <property type="match status" value="1"/>
</dbReference>
<dbReference type="Gene3D" id="3.30.160.20">
    <property type="match status" value="1"/>
</dbReference>
<dbReference type="Gene3D" id="3.30.70.1660">
    <property type="match status" value="1"/>
</dbReference>
<dbReference type="Gene3D" id="1.20.58.410">
    <property type="entry name" value="Release factor"/>
    <property type="match status" value="1"/>
</dbReference>
<dbReference type="HAMAP" id="MF_00094">
    <property type="entry name" value="Rel_fac_2"/>
    <property type="match status" value="1"/>
</dbReference>
<dbReference type="InterPro" id="IPR005139">
    <property type="entry name" value="PCRF"/>
</dbReference>
<dbReference type="InterPro" id="IPR000352">
    <property type="entry name" value="Pep_chain_release_fac_I"/>
</dbReference>
<dbReference type="InterPro" id="IPR045853">
    <property type="entry name" value="Pep_chain_release_fac_I_sf"/>
</dbReference>
<dbReference type="InterPro" id="IPR004374">
    <property type="entry name" value="PrfB"/>
</dbReference>
<dbReference type="NCBIfam" id="TIGR00020">
    <property type="entry name" value="prfB"/>
    <property type="match status" value="1"/>
</dbReference>
<dbReference type="PANTHER" id="PTHR43116:SF3">
    <property type="entry name" value="CLASS I PEPTIDE CHAIN RELEASE FACTOR"/>
    <property type="match status" value="1"/>
</dbReference>
<dbReference type="PANTHER" id="PTHR43116">
    <property type="entry name" value="PEPTIDE CHAIN RELEASE FACTOR 2"/>
    <property type="match status" value="1"/>
</dbReference>
<dbReference type="Pfam" id="PF03462">
    <property type="entry name" value="PCRF"/>
    <property type="match status" value="1"/>
</dbReference>
<dbReference type="Pfam" id="PF00472">
    <property type="entry name" value="RF-1"/>
    <property type="match status" value="1"/>
</dbReference>
<dbReference type="SMART" id="SM00937">
    <property type="entry name" value="PCRF"/>
    <property type="match status" value="1"/>
</dbReference>
<dbReference type="SUPFAM" id="SSF75620">
    <property type="entry name" value="Release factor"/>
    <property type="match status" value="1"/>
</dbReference>
<dbReference type="PROSITE" id="PS00745">
    <property type="entry name" value="RF_PROK_I"/>
    <property type="match status" value="1"/>
</dbReference>
<comment type="function">
    <text evidence="1">Peptide chain release factor 2 directs the termination of translation in response to the peptide chain termination codons UGA and UAA.</text>
</comment>
<comment type="subcellular location">
    <subcellularLocation>
        <location evidence="1">Cytoplasm</location>
    </subcellularLocation>
</comment>
<comment type="PTM">
    <text evidence="1">Methylated by PrmC. Methylation increases the termination efficiency of RF2.</text>
</comment>
<comment type="similarity">
    <text evidence="1">Belongs to the prokaryotic/mitochondrial release factor family.</text>
</comment>
<proteinExistence type="inferred from homology"/>
<protein>
    <recommendedName>
        <fullName evidence="1">Peptide chain release factor 2</fullName>
        <shortName evidence="1">RF-2</shortName>
    </recommendedName>
</protein>
<organism>
    <name type="scientific">Campylobacter jejuni subsp. jejuni serotype O:6 (strain 81116 / NCTC 11828)</name>
    <dbReference type="NCBI Taxonomy" id="407148"/>
    <lineage>
        <taxon>Bacteria</taxon>
        <taxon>Pseudomonadati</taxon>
        <taxon>Campylobacterota</taxon>
        <taxon>Epsilonproteobacteria</taxon>
        <taxon>Campylobacterales</taxon>
        <taxon>Campylobacteraceae</taxon>
        <taxon>Campylobacter</taxon>
    </lineage>
</organism>
<evidence type="ECO:0000255" key="1">
    <source>
        <dbReference type="HAMAP-Rule" id="MF_00094"/>
    </source>
</evidence>
<keyword id="KW-0963">Cytoplasm</keyword>
<keyword id="KW-0488">Methylation</keyword>
<keyword id="KW-0648">Protein biosynthesis</keyword>
<feature type="chain" id="PRO_1000071268" description="Peptide chain release factor 2">
    <location>
        <begin position="1"/>
        <end position="365"/>
    </location>
</feature>
<feature type="modified residue" description="N5-methylglutamine" evidence="1">
    <location>
        <position position="251"/>
    </location>
</feature>
<gene>
    <name evidence="1" type="primary">prfB</name>
    <name type="ordered locus">C8J_1361</name>
</gene>
<accession>A8FNC2</accession>
<sequence length="365" mass="41038">MDNYEFSELLKTLKNKVGNIASIIKPENIQTRLKEIEELENSPSFWSDVKQAGIIGKEKTKITNLLKNYENAFNALNDASELFDLANSENDTETLEALFNDAPKLEDTITSLEISMLLSGENDGKNAIVSIHPGAGGTESNDWASILYRMYLRFCEREGFKVETLDFQEGEEAGLKDVSFLVKGENAYGYLKAENGIHRLVRTSPFDSAGRRHTSFSSVMVSPELDDDIEIEIEEKDIRIDYYRASGAGGQHVNKTESAVRITHFPTGIVVQCQNDRSQHKNKATAFKMLKSRLYELELMKQQDSANAGEKSEIGWGHQIRSYVLFPYQQVKDNRSGEAFSQVDNILDGDIKKMIEGVLIALKAE</sequence>